<feature type="chain" id="PRO_0000323460" description="Elongation factor Ts">
    <location>
        <begin position="1"/>
        <end position="309"/>
    </location>
</feature>
<feature type="region of interest" description="Involved in Mg(2+) ion dislocation from EF-Tu" evidence="1">
    <location>
        <begin position="98"/>
        <end position="101"/>
    </location>
</feature>
<accession>A5CE05</accession>
<name>EFTS_ORITB</name>
<dbReference type="EMBL" id="AM494475">
    <property type="protein sequence ID" value="CAM80205.1"/>
    <property type="molecule type" value="Genomic_DNA"/>
</dbReference>
<dbReference type="RefSeq" id="WP_011944795.1">
    <property type="nucleotide sequence ID" value="NC_009488.1"/>
</dbReference>
<dbReference type="SMR" id="A5CE05"/>
<dbReference type="KEGG" id="ots:OTBS_1139"/>
<dbReference type="eggNOG" id="COG0264">
    <property type="taxonomic scope" value="Bacteria"/>
</dbReference>
<dbReference type="HOGENOM" id="CLU_047155_2_0_5"/>
<dbReference type="Proteomes" id="UP000001565">
    <property type="component" value="Chromosome"/>
</dbReference>
<dbReference type="GO" id="GO:0005737">
    <property type="term" value="C:cytoplasm"/>
    <property type="evidence" value="ECO:0007669"/>
    <property type="project" value="UniProtKB-SubCell"/>
</dbReference>
<dbReference type="GO" id="GO:0003746">
    <property type="term" value="F:translation elongation factor activity"/>
    <property type="evidence" value="ECO:0007669"/>
    <property type="project" value="UniProtKB-UniRule"/>
</dbReference>
<dbReference type="CDD" id="cd14275">
    <property type="entry name" value="UBA_EF-Ts"/>
    <property type="match status" value="1"/>
</dbReference>
<dbReference type="FunFam" id="1.10.286.20:FF:000001">
    <property type="entry name" value="Elongation factor Ts"/>
    <property type="match status" value="1"/>
</dbReference>
<dbReference type="FunFam" id="1.10.8.10:FF:000001">
    <property type="entry name" value="Elongation factor Ts"/>
    <property type="match status" value="1"/>
</dbReference>
<dbReference type="Gene3D" id="1.10.286.20">
    <property type="match status" value="1"/>
</dbReference>
<dbReference type="Gene3D" id="1.10.8.10">
    <property type="entry name" value="DNA helicase RuvA subunit, C-terminal domain"/>
    <property type="match status" value="1"/>
</dbReference>
<dbReference type="Gene3D" id="3.30.479.20">
    <property type="entry name" value="Elongation factor Ts, dimerisation domain"/>
    <property type="match status" value="2"/>
</dbReference>
<dbReference type="HAMAP" id="MF_00050">
    <property type="entry name" value="EF_Ts"/>
    <property type="match status" value="1"/>
</dbReference>
<dbReference type="InterPro" id="IPR036402">
    <property type="entry name" value="EF-Ts_dimer_sf"/>
</dbReference>
<dbReference type="InterPro" id="IPR001816">
    <property type="entry name" value="Transl_elong_EFTs/EF1B"/>
</dbReference>
<dbReference type="InterPro" id="IPR014039">
    <property type="entry name" value="Transl_elong_EFTs/EF1B_dimer"/>
</dbReference>
<dbReference type="InterPro" id="IPR009060">
    <property type="entry name" value="UBA-like_sf"/>
</dbReference>
<dbReference type="NCBIfam" id="TIGR00116">
    <property type="entry name" value="tsf"/>
    <property type="match status" value="1"/>
</dbReference>
<dbReference type="PANTHER" id="PTHR11741">
    <property type="entry name" value="ELONGATION FACTOR TS"/>
    <property type="match status" value="1"/>
</dbReference>
<dbReference type="PANTHER" id="PTHR11741:SF0">
    <property type="entry name" value="ELONGATION FACTOR TS, MITOCHONDRIAL"/>
    <property type="match status" value="1"/>
</dbReference>
<dbReference type="Pfam" id="PF00889">
    <property type="entry name" value="EF_TS"/>
    <property type="match status" value="1"/>
</dbReference>
<dbReference type="SUPFAM" id="SSF54713">
    <property type="entry name" value="Elongation factor Ts (EF-Ts), dimerisation domain"/>
    <property type="match status" value="2"/>
</dbReference>
<dbReference type="SUPFAM" id="SSF46934">
    <property type="entry name" value="UBA-like"/>
    <property type="match status" value="1"/>
</dbReference>
<proteinExistence type="inferred from homology"/>
<gene>
    <name evidence="1" type="primary">tsf</name>
    <name type="ordered locus">OTBS_1139</name>
</gene>
<keyword id="KW-0963">Cytoplasm</keyword>
<keyword id="KW-0251">Elongation factor</keyword>
<keyword id="KW-0648">Protein biosynthesis</keyword>
<keyword id="KW-1185">Reference proteome</keyword>
<comment type="function">
    <text evidence="1">Associates with the EF-Tu.GDP complex and induces the exchange of GDP to GTP. It remains bound to the aminoacyl-tRNA.EF-Tu.GTP complex up to the GTP hydrolysis stage on the ribosome.</text>
</comment>
<comment type="subcellular location">
    <subcellularLocation>
        <location evidence="1">Cytoplasm</location>
    </subcellularLocation>
</comment>
<comment type="similarity">
    <text evidence="1">Belongs to the EF-Ts family.</text>
</comment>
<organism>
    <name type="scientific">Orientia tsutsugamushi (strain Boryong)</name>
    <name type="common">Rickettsia tsutsugamushi</name>
    <dbReference type="NCBI Taxonomy" id="357244"/>
    <lineage>
        <taxon>Bacteria</taxon>
        <taxon>Pseudomonadati</taxon>
        <taxon>Pseudomonadota</taxon>
        <taxon>Alphaproteobacteria</taxon>
        <taxon>Rickettsiales</taxon>
        <taxon>Rickettsiaceae</taxon>
        <taxon>Rickettsieae</taxon>
        <taxon>Orientia</taxon>
    </lineage>
</organism>
<sequence length="309" mass="33610">MKEKELVVNTKTNGSKSEDVIISISLVKKLRDATGAAMTSCKQALQEAKGDIEEAIKVLRKTNLAQMSSKLQRKADEGIVALAVDNNKGAIIEIKFETDFVARNERLQKLAMEAAQLALVHDNLTDLKNAKLSSGETLESQISQDIAVIGENIQVSRIRQVKLVDNGIIASYIHNSVAPNLGQIAVLVALEGNVESDKLTKLGKNIAMHIAATNPRFLSSNEVPESVIMQEKEIFTAQARTTGKPEKVIEKMIEGRVSKFLEETVLLEQAFVIDGKTKISEVLSNAAKELGSEIKITGFSCLKAGEVVE</sequence>
<evidence type="ECO:0000255" key="1">
    <source>
        <dbReference type="HAMAP-Rule" id="MF_00050"/>
    </source>
</evidence>
<reference key="1">
    <citation type="journal article" date="2007" name="Proc. Natl. Acad. Sci. U.S.A.">
        <title>The Orientia tsutsugamushi genome reveals massive proliferation of conjugative type IV secretion system and host-cell interaction genes.</title>
        <authorList>
            <person name="Cho N.-H."/>
            <person name="Kim H.-R."/>
            <person name="Lee J.-H."/>
            <person name="Kim S.-Y."/>
            <person name="Kim J."/>
            <person name="Cha S."/>
            <person name="Kim S.-Y."/>
            <person name="Darby A.C."/>
            <person name="Fuxelius H.-H."/>
            <person name="Yin J."/>
            <person name="Kim J.H."/>
            <person name="Kim J."/>
            <person name="Lee S.J."/>
            <person name="Koh Y.-S."/>
            <person name="Jang W.-J."/>
            <person name="Park K.-H."/>
            <person name="Andersson S.G.E."/>
            <person name="Choi M.-S."/>
            <person name="Kim I.-S."/>
        </authorList>
    </citation>
    <scope>NUCLEOTIDE SEQUENCE [LARGE SCALE GENOMIC DNA]</scope>
    <source>
        <strain>Boryong</strain>
    </source>
</reference>
<protein>
    <recommendedName>
        <fullName evidence="1">Elongation factor Ts</fullName>
        <shortName evidence="1">EF-Ts</shortName>
    </recommendedName>
</protein>